<sequence>MTLPLHVVILAAGEGKRMRSALPKVLQPLAGQPMLAHVIATARELQPAAIHVVHGHGGAQVQAAFAGQPDLQWAEQRQQLGTGHAVQQALHAVPDAATVLVLYGDVPLIRSESLRELLHAPGRIAVLVADLANPSGYGRIVRNPEGKVAAIVEQKDADDEQRRIRTINTGILTAESTALRRWLGGLSNDNAQGEFYLTDVFASAAADYTPADMVQVSDPQDVEGANDPWQLAQLERAWQLRAARALCLQGVRMADPARVEQRGRVQVGHDVQLDIDVILEGEVTLGDGVVIGPFVRLRDVQLAAGTQVRAHCDLEGVVTEGAVQIGPFARLRPGTVLADGVHIGNFVETKKVVMGAGSKANHLTYLGDAVVGSKVNIGAGTITCNYDGVNKSQTTIGDGAFVGSNSALVAPIEIGTGATIGAGSVITRDAPPHQLSVARPRQTVIEGWERPKKK</sequence>
<evidence type="ECO:0000255" key="1">
    <source>
        <dbReference type="HAMAP-Rule" id="MF_01631"/>
    </source>
</evidence>
<protein>
    <recommendedName>
        <fullName evidence="1">Bifunctional protein GlmU</fullName>
    </recommendedName>
    <domain>
        <recommendedName>
            <fullName evidence="1">UDP-N-acetylglucosamine pyrophosphorylase</fullName>
            <ecNumber evidence="1">2.7.7.23</ecNumber>
        </recommendedName>
        <alternativeName>
            <fullName evidence="1">N-acetylglucosamine-1-phosphate uridyltransferase</fullName>
        </alternativeName>
    </domain>
    <domain>
        <recommendedName>
            <fullName evidence="1">Glucosamine-1-phosphate N-acetyltransferase</fullName>
            <ecNumber evidence="1">2.3.1.157</ecNumber>
        </recommendedName>
    </domain>
</protein>
<dbReference type="EC" id="2.7.7.23" evidence="1"/>
<dbReference type="EC" id="2.3.1.157" evidence="1"/>
<dbReference type="EMBL" id="CP000050">
    <property type="protein sequence ID" value="AAY50715.1"/>
    <property type="molecule type" value="Genomic_DNA"/>
</dbReference>
<dbReference type="RefSeq" id="WP_011035805.1">
    <property type="nucleotide sequence ID" value="NZ_CP155948.1"/>
</dbReference>
<dbReference type="SMR" id="Q4UQF8"/>
<dbReference type="KEGG" id="xcb:XC_3674"/>
<dbReference type="HOGENOM" id="CLU_029499_15_2_6"/>
<dbReference type="UniPathway" id="UPA00113">
    <property type="reaction ID" value="UER00532"/>
</dbReference>
<dbReference type="UniPathway" id="UPA00113">
    <property type="reaction ID" value="UER00533"/>
</dbReference>
<dbReference type="UniPathway" id="UPA00973"/>
<dbReference type="Proteomes" id="UP000000420">
    <property type="component" value="Chromosome"/>
</dbReference>
<dbReference type="GO" id="GO:0005737">
    <property type="term" value="C:cytoplasm"/>
    <property type="evidence" value="ECO:0007669"/>
    <property type="project" value="UniProtKB-SubCell"/>
</dbReference>
<dbReference type="GO" id="GO:0016020">
    <property type="term" value="C:membrane"/>
    <property type="evidence" value="ECO:0007669"/>
    <property type="project" value="GOC"/>
</dbReference>
<dbReference type="GO" id="GO:0019134">
    <property type="term" value="F:glucosamine-1-phosphate N-acetyltransferase activity"/>
    <property type="evidence" value="ECO:0007669"/>
    <property type="project" value="UniProtKB-UniRule"/>
</dbReference>
<dbReference type="GO" id="GO:0000287">
    <property type="term" value="F:magnesium ion binding"/>
    <property type="evidence" value="ECO:0007669"/>
    <property type="project" value="UniProtKB-UniRule"/>
</dbReference>
<dbReference type="GO" id="GO:0003977">
    <property type="term" value="F:UDP-N-acetylglucosamine diphosphorylase activity"/>
    <property type="evidence" value="ECO:0007669"/>
    <property type="project" value="UniProtKB-UniRule"/>
</dbReference>
<dbReference type="GO" id="GO:0000902">
    <property type="term" value="P:cell morphogenesis"/>
    <property type="evidence" value="ECO:0007669"/>
    <property type="project" value="UniProtKB-UniRule"/>
</dbReference>
<dbReference type="GO" id="GO:0071555">
    <property type="term" value="P:cell wall organization"/>
    <property type="evidence" value="ECO:0007669"/>
    <property type="project" value="UniProtKB-KW"/>
</dbReference>
<dbReference type="GO" id="GO:0009245">
    <property type="term" value="P:lipid A biosynthetic process"/>
    <property type="evidence" value="ECO:0007669"/>
    <property type="project" value="UniProtKB-UniRule"/>
</dbReference>
<dbReference type="GO" id="GO:0009252">
    <property type="term" value="P:peptidoglycan biosynthetic process"/>
    <property type="evidence" value="ECO:0007669"/>
    <property type="project" value="UniProtKB-UniRule"/>
</dbReference>
<dbReference type="GO" id="GO:0008360">
    <property type="term" value="P:regulation of cell shape"/>
    <property type="evidence" value="ECO:0007669"/>
    <property type="project" value="UniProtKB-KW"/>
</dbReference>
<dbReference type="GO" id="GO:0006048">
    <property type="term" value="P:UDP-N-acetylglucosamine biosynthetic process"/>
    <property type="evidence" value="ECO:0007669"/>
    <property type="project" value="UniProtKB-UniPathway"/>
</dbReference>
<dbReference type="CDD" id="cd02540">
    <property type="entry name" value="GT2_GlmU_N_bac"/>
    <property type="match status" value="1"/>
</dbReference>
<dbReference type="CDD" id="cd03353">
    <property type="entry name" value="LbH_GlmU_C"/>
    <property type="match status" value="1"/>
</dbReference>
<dbReference type="Gene3D" id="2.160.10.10">
    <property type="entry name" value="Hexapeptide repeat proteins"/>
    <property type="match status" value="1"/>
</dbReference>
<dbReference type="Gene3D" id="3.90.550.10">
    <property type="entry name" value="Spore Coat Polysaccharide Biosynthesis Protein SpsA, Chain A"/>
    <property type="match status" value="1"/>
</dbReference>
<dbReference type="HAMAP" id="MF_01631">
    <property type="entry name" value="GlmU"/>
    <property type="match status" value="1"/>
</dbReference>
<dbReference type="InterPro" id="IPR005882">
    <property type="entry name" value="Bifunctional_GlmU"/>
</dbReference>
<dbReference type="InterPro" id="IPR050065">
    <property type="entry name" value="GlmU-like"/>
</dbReference>
<dbReference type="InterPro" id="IPR038009">
    <property type="entry name" value="GlmU_C_LbH"/>
</dbReference>
<dbReference type="InterPro" id="IPR001451">
    <property type="entry name" value="Hexapep"/>
</dbReference>
<dbReference type="InterPro" id="IPR018357">
    <property type="entry name" value="Hexapep_transf_CS"/>
</dbReference>
<dbReference type="InterPro" id="IPR025877">
    <property type="entry name" value="MobA-like_NTP_Trfase"/>
</dbReference>
<dbReference type="InterPro" id="IPR029044">
    <property type="entry name" value="Nucleotide-diphossugar_trans"/>
</dbReference>
<dbReference type="InterPro" id="IPR011004">
    <property type="entry name" value="Trimer_LpxA-like_sf"/>
</dbReference>
<dbReference type="NCBIfam" id="TIGR01173">
    <property type="entry name" value="glmU"/>
    <property type="match status" value="1"/>
</dbReference>
<dbReference type="PANTHER" id="PTHR43584:SF3">
    <property type="entry name" value="BIFUNCTIONAL PROTEIN GLMU"/>
    <property type="match status" value="1"/>
</dbReference>
<dbReference type="PANTHER" id="PTHR43584">
    <property type="entry name" value="NUCLEOTIDYL TRANSFERASE"/>
    <property type="match status" value="1"/>
</dbReference>
<dbReference type="Pfam" id="PF00132">
    <property type="entry name" value="Hexapep"/>
    <property type="match status" value="1"/>
</dbReference>
<dbReference type="Pfam" id="PF12804">
    <property type="entry name" value="NTP_transf_3"/>
    <property type="match status" value="1"/>
</dbReference>
<dbReference type="SUPFAM" id="SSF53448">
    <property type="entry name" value="Nucleotide-diphospho-sugar transferases"/>
    <property type="match status" value="1"/>
</dbReference>
<dbReference type="SUPFAM" id="SSF51161">
    <property type="entry name" value="Trimeric LpxA-like enzymes"/>
    <property type="match status" value="1"/>
</dbReference>
<dbReference type="PROSITE" id="PS00101">
    <property type="entry name" value="HEXAPEP_TRANSFERASES"/>
    <property type="match status" value="1"/>
</dbReference>
<proteinExistence type="inferred from homology"/>
<reference key="1">
    <citation type="journal article" date="2005" name="Genome Res.">
        <title>Comparative and functional genomic analyses of the pathogenicity of phytopathogen Xanthomonas campestris pv. campestris.</title>
        <authorList>
            <person name="Qian W."/>
            <person name="Jia Y."/>
            <person name="Ren S.-X."/>
            <person name="He Y.-Q."/>
            <person name="Feng J.-X."/>
            <person name="Lu L.-F."/>
            <person name="Sun Q."/>
            <person name="Ying G."/>
            <person name="Tang D.-J."/>
            <person name="Tang H."/>
            <person name="Wu W."/>
            <person name="Hao P."/>
            <person name="Wang L."/>
            <person name="Jiang B.-L."/>
            <person name="Zeng S."/>
            <person name="Gu W.-Y."/>
            <person name="Lu G."/>
            <person name="Rong L."/>
            <person name="Tian Y."/>
            <person name="Yao Z."/>
            <person name="Fu G."/>
            <person name="Chen B."/>
            <person name="Fang R."/>
            <person name="Qiang B."/>
            <person name="Chen Z."/>
            <person name="Zhao G.-P."/>
            <person name="Tang J.-L."/>
            <person name="He C."/>
        </authorList>
    </citation>
    <scope>NUCLEOTIDE SEQUENCE [LARGE SCALE GENOMIC DNA]</scope>
    <source>
        <strain>8004</strain>
    </source>
</reference>
<organism>
    <name type="scientific">Xanthomonas campestris pv. campestris (strain 8004)</name>
    <dbReference type="NCBI Taxonomy" id="314565"/>
    <lineage>
        <taxon>Bacteria</taxon>
        <taxon>Pseudomonadati</taxon>
        <taxon>Pseudomonadota</taxon>
        <taxon>Gammaproteobacteria</taxon>
        <taxon>Lysobacterales</taxon>
        <taxon>Lysobacteraceae</taxon>
        <taxon>Xanthomonas</taxon>
    </lineage>
</organism>
<keyword id="KW-0012">Acyltransferase</keyword>
<keyword id="KW-0133">Cell shape</keyword>
<keyword id="KW-0961">Cell wall biogenesis/degradation</keyword>
<keyword id="KW-0963">Cytoplasm</keyword>
<keyword id="KW-0460">Magnesium</keyword>
<keyword id="KW-0479">Metal-binding</keyword>
<keyword id="KW-0511">Multifunctional enzyme</keyword>
<keyword id="KW-0548">Nucleotidyltransferase</keyword>
<keyword id="KW-0573">Peptidoglycan synthesis</keyword>
<keyword id="KW-0677">Repeat</keyword>
<keyword id="KW-0808">Transferase</keyword>
<accession>Q4UQF8</accession>
<feature type="chain" id="PRO_0000233883" description="Bifunctional protein GlmU">
    <location>
        <begin position="1"/>
        <end position="454"/>
    </location>
</feature>
<feature type="region of interest" description="Pyrophosphorylase" evidence="1">
    <location>
        <begin position="1"/>
        <end position="228"/>
    </location>
</feature>
<feature type="region of interest" description="Linker" evidence="1">
    <location>
        <begin position="229"/>
        <end position="249"/>
    </location>
</feature>
<feature type="region of interest" description="N-acetyltransferase" evidence="1">
    <location>
        <begin position="250"/>
        <end position="454"/>
    </location>
</feature>
<feature type="active site" description="Proton acceptor" evidence="1">
    <location>
        <position position="362"/>
    </location>
</feature>
<feature type="binding site" evidence="1">
    <location>
        <begin position="10"/>
        <end position="13"/>
    </location>
    <ligand>
        <name>UDP-N-acetyl-alpha-D-glucosamine</name>
        <dbReference type="ChEBI" id="CHEBI:57705"/>
    </ligand>
</feature>
<feature type="binding site" evidence="1">
    <location>
        <position position="24"/>
    </location>
    <ligand>
        <name>UDP-N-acetyl-alpha-D-glucosamine</name>
        <dbReference type="ChEBI" id="CHEBI:57705"/>
    </ligand>
</feature>
<feature type="binding site" evidence="1">
    <location>
        <position position="76"/>
    </location>
    <ligand>
        <name>UDP-N-acetyl-alpha-D-glucosamine</name>
        <dbReference type="ChEBI" id="CHEBI:57705"/>
    </ligand>
</feature>
<feature type="binding site" evidence="1">
    <location>
        <begin position="81"/>
        <end position="82"/>
    </location>
    <ligand>
        <name>UDP-N-acetyl-alpha-D-glucosamine</name>
        <dbReference type="ChEBI" id="CHEBI:57705"/>
    </ligand>
</feature>
<feature type="binding site" evidence="1">
    <location>
        <begin position="103"/>
        <end position="105"/>
    </location>
    <ligand>
        <name>UDP-N-acetyl-alpha-D-glucosamine</name>
        <dbReference type="ChEBI" id="CHEBI:57705"/>
    </ligand>
</feature>
<feature type="binding site" evidence="1">
    <location>
        <position position="105"/>
    </location>
    <ligand>
        <name>Mg(2+)</name>
        <dbReference type="ChEBI" id="CHEBI:18420"/>
    </ligand>
</feature>
<feature type="binding site" evidence="1">
    <location>
        <position position="138"/>
    </location>
    <ligand>
        <name>UDP-N-acetyl-alpha-D-glucosamine</name>
        <dbReference type="ChEBI" id="CHEBI:57705"/>
    </ligand>
</feature>
<feature type="binding site" evidence="1">
    <location>
        <position position="153"/>
    </location>
    <ligand>
        <name>UDP-N-acetyl-alpha-D-glucosamine</name>
        <dbReference type="ChEBI" id="CHEBI:57705"/>
    </ligand>
</feature>
<feature type="binding site" evidence="1">
    <location>
        <position position="168"/>
    </location>
    <ligand>
        <name>UDP-N-acetyl-alpha-D-glucosamine</name>
        <dbReference type="ChEBI" id="CHEBI:57705"/>
    </ligand>
</feature>
<feature type="binding site" evidence="1">
    <location>
        <position position="226"/>
    </location>
    <ligand>
        <name>Mg(2+)</name>
        <dbReference type="ChEBI" id="CHEBI:18420"/>
    </ligand>
</feature>
<feature type="binding site" evidence="1">
    <location>
        <position position="226"/>
    </location>
    <ligand>
        <name>UDP-N-acetyl-alpha-D-glucosamine</name>
        <dbReference type="ChEBI" id="CHEBI:57705"/>
    </ligand>
</feature>
<feature type="binding site" evidence="1">
    <location>
        <position position="332"/>
    </location>
    <ligand>
        <name>UDP-N-acetyl-alpha-D-glucosamine</name>
        <dbReference type="ChEBI" id="CHEBI:57705"/>
    </ligand>
</feature>
<feature type="binding site" evidence="1">
    <location>
        <position position="350"/>
    </location>
    <ligand>
        <name>UDP-N-acetyl-alpha-D-glucosamine</name>
        <dbReference type="ChEBI" id="CHEBI:57705"/>
    </ligand>
</feature>
<feature type="binding site" evidence="1">
    <location>
        <position position="365"/>
    </location>
    <ligand>
        <name>UDP-N-acetyl-alpha-D-glucosamine</name>
        <dbReference type="ChEBI" id="CHEBI:57705"/>
    </ligand>
</feature>
<feature type="binding site" evidence="1">
    <location>
        <position position="376"/>
    </location>
    <ligand>
        <name>UDP-N-acetyl-alpha-D-glucosamine</name>
        <dbReference type="ChEBI" id="CHEBI:57705"/>
    </ligand>
</feature>
<feature type="binding site" evidence="1">
    <location>
        <position position="379"/>
    </location>
    <ligand>
        <name>acetyl-CoA</name>
        <dbReference type="ChEBI" id="CHEBI:57288"/>
    </ligand>
</feature>
<feature type="binding site" evidence="1">
    <location>
        <begin position="385"/>
        <end position="386"/>
    </location>
    <ligand>
        <name>acetyl-CoA</name>
        <dbReference type="ChEBI" id="CHEBI:57288"/>
    </ligand>
</feature>
<feature type="binding site" evidence="1">
    <location>
        <position position="404"/>
    </location>
    <ligand>
        <name>acetyl-CoA</name>
        <dbReference type="ChEBI" id="CHEBI:57288"/>
    </ligand>
</feature>
<feature type="binding site" evidence="1">
    <location>
        <position position="422"/>
    </location>
    <ligand>
        <name>acetyl-CoA</name>
        <dbReference type="ChEBI" id="CHEBI:57288"/>
    </ligand>
</feature>
<feature type="binding site" evidence="1">
    <location>
        <position position="439"/>
    </location>
    <ligand>
        <name>acetyl-CoA</name>
        <dbReference type="ChEBI" id="CHEBI:57288"/>
    </ligand>
</feature>
<name>GLMU_XANC8</name>
<gene>
    <name evidence="1" type="primary">glmU</name>
    <name type="ordered locus">XC_3674</name>
</gene>
<comment type="function">
    <text evidence="1">Catalyzes the last two sequential reactions in the de novo biosynthetic pathway for UDP-N-acetylglucosamine (UDP-GlcNAc). The C-terminal domain catalyzes the transfer of acetyl group from acetyl coenzyme A to glucosamine-1-phosphate (GlcN-1-P) to produce N-acetylglucosamine-1-phosphate (GlcNAc-1-P), which is converted into UDP-GlcNAc by the transfer of uridine 5-monophosphate (from uridine 5-triphosphate), a reaction catalyzed by the N-terminal domain.</text>
</comment>
<comment type="catalytic activity">
    <reaction evidence="1">
        <text>alpha-D-glucosamine 1-phosphate + acetyl-CoA = N-acetyl-alpha-D-glucosamine 1-phosphate + CoA + H(+)</text>
        <dbReference type="Rhea" id="RHEA:13725"/>
        <dbReference type="ChEBI" id="CHEBI:15378"/>
        <dbReference type="ChEBI" id="CHEBI:57287"/>
        <dbReference type="ChEBI" id="CHEBI:57288"/>
        <dbReference type="ChEBI" id="CHEBI:57776"/>
        <dbReference type="ChEBI" id="CHEBI:58516"/>
        <dbReference type="EC" id="2.3.1.157"/>
    </reaction>
</comment>
<comment type="catalytic activity">
    <reaction evidence="1">
        <text>N-acetyl-alpha-D-glucosamine 1-phosphate + UTP + H(+) = UDP-N-acetyl-alpha-D-glucosamine + diphosphate</text>
        <dbReference type="Rhea" id="RHEA:13509"/>
        <dbReference type="ChEBI" id="CHEBI:15378"/>
        <dbReference type="ChEBI" id="CHEBI:33019"/>
        <dbReference type="ChEBI" id="CHEBI:46398"/>
        <dbReference type="ChEBI" id="CHEBI:57705"/>
        <dbReference type="ChEBI" id="CHEBI:57776"/>
        <dbReference type="EC" id="2.7.7.23"/>
    </reaction>
</comment>
<comment type="cofactor">
    <cofactor evidence="1">
        <name>Mg(2+)</name>
        <dbReference type="ChEBI" id="CHEBI:18420"/>
    </cofactor>
    <text evidence="1">Binds 1 Mg(2+) ion per subunit.</text>
</comment>
<comment type="pathway">
    <text evidence="1">Nucleotide-sugar biosynthesis; UDP-N-acetyl-alpha-D-glucosamine biosynthesis; N-acetyl-alpha-D-glucosamine 1-phosphate from alpha-D-glucosamine 6-phosphate (route II): step 2/2.</text>
</comment>
<comment type="pathway">
    <text evidence="1">Nucleotide-sugar biosynthesis; UDP-N-acetyl-alpha-D-glucosamine biosynthesis; UDP-N-acetyl-alpha-D-glucosamine from N-acetyl-alpha-D-glucosamine 1-phosphate: step 1/1.</text>
</comment>
<comment type="pathway">
    <text evidence="1">Bacterial outer membrane biogenesis; LPS lipid A biosynthesis.</text>
</comment>
<comment type="subunit">
    <text evidence="1">Homotrimer.</text>
</comment>
<comment type="subcellular location">
    <subcellularLocation>
        <location evidence="1">Cytoplasm</location>
    </subcellularLocation>
</comment>
<comment type="similarity">
    <text evidence="1">In the N-terminal section; belongs to the N-acetylglucosamine-1-phosphate uridyltransferase family.</text>
</comment>
<comment type="similarity">
    <text evidence="1">In the C-terminal section; belongs to the transferase hexapeptide repeat family.</text>
</comment>